<keyword id="KW-0002">3D-structure</keyword>
<keyword id="KW-0456">Lyase</keyword>
<keyword id="KW-0556">Organic radical</keyword>
<name>HYPD_CLODI</name>
<comment type="function">
    <text evidence="4">Glycine radical enzyme that catalyzes the dehydration of the non-proteinogenic amino acid trans-4-hydroxy-L-proline (Hyp) to produce delta(1)-pyrroline-5-carboxylate (P5C). Is involved in the anaerobic degradation of 4-hydroxyproline.</text>
</comment>
<comment type="catalytic activity">
    <reaction evidence="4">
        <text>trans-4-hydroxy-L-proline = (S)-1-pyrroline-5-carboxylate + H2O + H(+)</text>
        <dbReference type="Rhea" id="RHEA:54644"/>
        <dbReference type="ChEBI" id="CHEBI:15377"/>
        <dbReference type="ChEBI" id="CHEBI:15378"/>
        <dbReference type="ChEBI" id="CHEBI:17388"/>
        <dbReference type="ChEBI" id="CHEBI:58375"/>
        <dbReference type="EC" id="4.2.1.172"/>
    </reaction>
</comment>
<comment type="biophysicochemical properties">
    <kinetics>
        <KM evidence="4">1.2 mM for trans-4-hydroxy-L-proline</KM>
        <text evidence="4">kcat is 45 sec(-1) for trans-4-hydroxy-L-proline as substrate.</text>
    </kinetics>
</comment>
<comment type="PTM">
    <text evidence="4">Requires the activating protein PflE to generate the key active site glycyl radical on Gly-765 that is involved in catalysis.</text>
</comment>
<comment type="similarity">
    <text evidence="7">Belongs to the glycyl radical enzyme (GRE) family. HYPD subfamily.</text>
</comment>
<gene>
    <name evidence="6" type="primary">pflD</name>
    <name evidence="12" type="synonym">csdB_2</name>
    <name evidence="11" type="ORF">BGU81_07860</name>
    <name evidence="10" type="ORF">BN1095_640054</name>
    <name evidence="9" type="ORF">BN1096_740112</name>
    <name evidence="8" type="ORF">BN1097_360077</name>
    <name evidence="12" type="ORF">SAMEA3375004_02654</name>
</gene>
<proteinExistence type="evidence at protein level"/>
<feature type="chain" id="PRO_0000445027" description="Trans-4-hydroxy-L-proline dehydratase">
    <location>
        <begin position="1"/>
        <end position="789"/>
    </location>
</feature>
<feature type="domain" description="PFL" evidence="3">
    <location>
        <begin position="7"/>
        <end position="663"/>
    </location>
</feature>
<feature type="domain" description="Glycine radical" evidence="2">
    <location>
        <begin position="670"/>
        <end position="789"/>
    </location>
</feature>
<feature type="active site" description="Cysteine radical intermediate" evidence="1">
    <location>
        <position position="434"/>
    </location>
</feature>
<feature type="active site" description="Proton acceptor" evidence="1">
    <location>
        <position position="436"/>
    </location>
</feature>
<feature type="modified residue" description="Glycine radical" evidence="2 4">
    <location>
        <position position="765"/>
    </location>
</feature>
<feature type="helix" evidence="13">
    <location>
        <begin position="7"/>
        <end position="18"/>
    </location>
</feature>
<feature type="strand" evidence="13">
    <location>
        <begin position="22"/>
        <end position="24"/>
    </location>
</feature>
<feature type="helix" evidence="13">
    <location>
        <begin position="26"/>
        <end position="38"/>
    </location>
</feature>
<feature type="turn" evidence="13">
    <location>
        <begin position="39"/>
        <end position="41"/>
    </location>
</feature>
<feature type="helix" evidence="13">
    <location>
        <begin position="44"/>
        <end position="58"/>
    </location>
</feature>
<feature type="strand" evidence="13">
    <location>
        <begin position="73"/>
        <end position="76"/>
    </location>
</feature>
<feature type="strand" evidence="13">
    <location>
        <begin position="79"/>
        <end position="81"/>
    </location>
</feature>
<feature type="turn" evidence="13">
    <location>
        <begin position="84"/>
        <end position="86"/>
    </location>
</feature>
<feature type="helix" evidence="13">
    <location>
        <begin position="91"/>
        <end position="99"/>
    </location>
</feature>
<feature type="strand" evidence="13">
    <location>
        <begin position="101"/>
        <end position="103"/>
    </location>
</feature>
<feature type="helix" evidence="13">
    <location>
        <begin position="109"/>
        <end position="117"/>
    </location>
</feature>
<feature type="helix" evidence="13">
    <location>
        <begin position="119"/>
        <end position="123"/>
    </location>
</feature>
<feature type="turn" evidence="13">
    <location>
        <begin position="124"/>
        <end position="126"/>
    </location>
</feature>
<feature type="helix" evidence="13">
    <location>
        <begin position="128"/>
        <end position="135"/>
    </location>
</feature>
<feature type="helix" evidence="13">
    <location>
        <begin position="138"/>
        <end position="145"/>
    </location>
</feature>
<feature type="turn" evidence="13">
    <location>
        <begin position="152"/>
        <end position="155"/>
    </location>
</feature>
<feature type="strand" evidence="13">
    <location>
        <begin position="156"/>
        <end position="158"/>
    </location>
</feature>
<feature type="helix" evidence="13">
    <location>
        <begin position="166"/>
        <end position="169"/>
    </location>
</feature>
<feature type="helix" evidence="13">
    <location>
        <begin position="172"/>
        <end position="185"/>
    </location>
</feature>
<feature type="turn" evidence="13">
    <location>
        <begin position="188"/>
        <end position="190"/>
    </location>
</feature>
<feature type="helix" evidence="13">
    <location>
        <begin position="194"/>
        <end position="228"/>
    </location>
</feature>
<feature type="helix" evidence="13">
    <location>
        <begin position="232"/>
        <end position="247"/>
    </location>
</feature>
<feature type="turn" evidence="13">
    <location>
        <begin position="248"/>
        <end position="250"/>
    </location>
</feature>
<feature type="helix" evidence="13">
    <location>
        <begin position="256"/>
        <end position="273"/>
    </location>
</feature>
<feature type="helix" evidence="13">
    <location>
        <begin position="285"/>
        <end position="298"/>
    </location>
</feature>
<feature type="helix" evidence="13">
    <location>
        <begin position="304"/>
        <end position="319"/>
    </location>
</feature>
<feature type="helix" evidence="13">
    <location>
        <begin position="328"/>
        <end position="333"/>
    </location>
</feature>
<feature type="strand" evidence="13">
    <location>
        <begin position="342"/>
        <end position="348"/>
    </location>
</feature>
<feature type="strand" evidence="13">
    <location>
        <begin position="352"/>
        <end position="354"/>
    </location>
</feature>
<feature type="helix" evidence="13">
    <location>
        <begin position="358"/>
        <end position="370"/>
    </location>
</feature>
<feature type="strand" evidence="13">
    <location>
        <begin position="373"/>
        <end position="381"/>
    </location>
</feature>
<feature type="helix" evidence="13">
    <location>
        <begin position="387"/>
        <end position="397"/>
    </location>
</feature>
<feature type="strand" evidence="13">
    <location>
        <begin position="406"/>
        <end position="408"/>
    </location>
</feature>
<feature type="helix" evidence="13">
    <location>
        <begin position="409"/>
        <end position="418"/>
    </location>
</feature>
<feature type="helix" evidence="13">
    <location>
        <begin position="423"/>
        <end position="426"/>
    </location>
</feature>
<feature type="strand" evidence="13">
    <location>
        <begin position="430"/>
        <end position="432"/>
    </location>
</feature>
<feature type="turn" evidence="13">
    <location>
        <begin position="433"/>
        <end position="435"/>
    </location>
</feature>
<feature type="strand" evidence="13">
    <location>
        <begin position="436"/>
        <end position="438"/>
    </location>
</feature>
<feature type="strand" evidence="13">
    <location>
        <begin position="442"/>
        <end position="452"/>
    </location>
</feature>
<feature type="helix" evidence="13">
    <location>
        <begin position="453"/>
        <end position="461"/>
    </location>
</feature>
<feature type="turn" evidence="13">
    <location>
        <begin position="462"/>
        <end position="464"/>
    </location>
</feature>
<feature type="turn" evidence="13">
    <location>
        <begin position="467"/>
        <end position="470"/>
    </location>
</feature>
<feature type="helix" evidence="13">
    <location>
        <begin position="480"/>
        <end position="482"/>
    </location>
</feature>
<feature type="helix" evidence="13">
    <location>
        <begin position="486"/>
        <end position="518"/>
    </location>
</feature>
<feature type="helix" evidence="13">
    <location>
        <begin position="522"/>
        <end position="527"/>
    </location>
</feature>
<feature type="helix" evidence="13">
    <location>
        <begin position="531"/>
        <end position="534"/>
    </location>
</feature>
<feature type="helix" evidence="13">
    <location>
        <begin position="538"/>
        <end position="540"/>
    </location>
</feature>
<feature type="strand" evidence="13">
    <location>
        <begin position="543"/>
        <end position="553"/>
    </location>
</feature>
<feature type="helix" evidence="13">
    <location>
        <begin position="555"/>
        <end position="568"/>
    </location>
</feature>
<feature type="turn" evidence="13">
    <location>
        <begin position="569"/>
        <end position="571"/>
    </location>
</feature>
<feature type="helix" evidence="13">
    <location>
        <begin position="577"/>
        <end position="585"/>
    </location>
</feature>
<feature type="turn" evidence="13">
    <location>
        <begin position="586"/>
        <end position="590"/>
    </location>
</feature>
<feature type="helix" evidence="13">
    <location>
        <begin position="592"/>
        <end position="600"/>
    </location>
</feature>
<feature type="helix" evidence="13">
    <location>
        <begin position="610"/>
        <end position="627"/>
    </location>
</feature>
<feature type="strand" evidence="13">
    <location>
        <begin position="637"/>
        <end position="642"/>
    </location>
</feature>
<feature type="helix" evidence="13">
    <location>
        <begin position="647"/>
        <end position="653"/>
    </location>
</feature>
<feature type="turn" evidence="13">
    <location>
        <begin position="676"/>
        <end position="678"/>
    </location>
</feature>
<feature type="helix" evidence="13">
    <location>
        <begin position="683"/>
        <end position="691"/>
    </location>
</feature>
<feature type="helix" evidence="13">
    <location>
        <begin position="695"/>
        <end position="697"/>
    </location>
</feature>
<feature type="strand" evidence="13">
    <location>
        <begin position="704"/>
        <end position="707"/>
    </location>
</feature>
<feature type="helix" evidence="13">
    <location>
        <begin position="709"/>
        <end position="712"/>
    </location>
</feature>
<feature type="helix" evidence="13">
    <location>
        <begin position="714"/>
        <end position="730"/>
    </location>
</feature>
<feature type="strand" evidence="13">
    <location>
        <begin position="735"/>
        <end position="739"/>
    </location>
</feature>
<feature type="helix" evidence="13">
    <location>
        <begin position="743"/>
        <end position="751"/>
    </location>
</feature>
<feature type="helix" evidence="13">
    <location>
        <begin position="753"/>
        <end position="755"/>
    </location>
</feature>
<feature type="strand" evidence="13">
    <location>
        <begin position="760"/>
        <end position="762"/>
    </location>
</feature>
<feature type="strand" evidence="13">
    <location>
        <begin position="764"/>
        <end position="769"/>
    </location>
</feature>
<feature type="helix" evidence="13">
    <location>
        <begin position="770"/>
        <end position="772"/>
    </location>
</feature>
<feature type="helix" evidence="13">
    <location>
        <begin position="775"/>
        <end position="782"/>
    </location>
</feature>
<organism>
    <name type="scientific">Clostridioides difficile</name>
    <name type="common">Peptoclostridium difficile</name>
    <dbReference type="NCBI Taxonomy" id="1496"/>
    <lineage>
        <taxon>Bacteria</taxon>
        <taxon>Bacillati</taxon>
        <taxon>Bacillota</taxon>
        <taxon>Clostridia</taxon>
        <taxon>Peptostreptococcales</taxon>
        <taxon>Peptostreptococcaceae</taxon>
        <taxon>Clostridioides</taxon>
    </lineage>
</organism>
<dbReference type="EC" id="4.2.1.172" evidence="4"/>
<dbReference type="EMBL" id="LK932372">
    <property type="protein sequence ID" value="CDS85123.1"/>
    <property type="molecule type" value="Genomic_DNA"/>
</dbReference>
<dbReference type="EMBL" id="LK932529">
    <property type="protein sequence ID" value="CDS89454.1"/>
    <property type="molecule type" value="Genomic_DNA"/>
</dbReference>
<dbReference type="EMBL" id="LK933338">
    <property type="protein sequence ID" value="CDT68933.1"/>
    <property type="molecule type" value="Genomic_DNA"/>
</dbReference>
<dbReference type="EMBL" id="MPEQ01000010">
    <property type="protein sequence ID" value="PBG28510.1"/>
    <property type="molecule type" value="Genomic_DNA"/>
</dbReference>
<dbReference type="EMBL" id="FURH01000003">
    <property type="protein sequence ID" value="SJT80202.1"/>
    <property type="molecule type" value="Genomic_DNA"/>
</dbReference>
<dbReference type="PDB" id="6VXC">
    <property type="method" value="X-ray"/>
    <property type="resolution" value="2.05 A"/>
    <property type="chains" value="A/B/C/D/E/F/G/H=1-789"/>
</dbReference>
<dbReference type="PDB" id="6VXE">
    <property type="method" value="X-ray"/>
    <property type="resolution" value="2.46 A"/>
    <property type="chains" value="A/B/C/D/E/F/G/H=1-789"/>
</dbReference>
<dbReference type="PDBsum" id="6VXC"/>
<dbReference type="PDBsum" id="6VXE"/>
<dbReference type="SMR" id="A0A031WDE4"/>
<dbReference type="GO" id="GO:0005829">
    <property type="term" value="C:cytosol"/>
    <property type="evidence" value="ECO:0007669"/>
    <property type="project" value="TreeGrafter"/>
</dbReference>
<dbReference type="GO" id="GO:0016835">
    <property type="term" value="F:carbon-oxygen lyase activity"/>
    <property type="evidence" value="ECO:0000314"/>
    <property type="project" value="UniProtKB"/>
</dbReference>
<dbReference type="GO" id="GO:0019471">
    <property type="term" value="P:4-hydroxyproline metabolic process"/>
    <property type="evidence" value="ECO:0007669"/>
    <property type="project" value="InterPro"/>
</dbReference>
<dbReference type="GO" id="GO:0019492">
    <property type="term" value="P:proline salvage"/>
    <property type="evidence" value="ECO:0000314"/>
    <property type="project" value="UniProtKB"/>
</dbReference>
<dbReference type="CDD" id="cd01677">
    <property type="entry name" value="PFL2_DhaB_BssA"/>
    <property type="match status" value="1"/>
</dbReference>
<dbReference type="FunFam" id="3.20.70.20:FF:000008">
    <property type="entry name" value="Hypothetical formate acetyltransferase 3"/>
    <property type="match status" value="1"/>
</dbReference>
<dbReference type="Gene3D" id="3.20.70.20">
    <property type="match status" value="1"/>
</dbReference>
<dbReference type="InterPro" id="IPR001150">
    <property type="entry name" value="Gly_radical"/>
</dbReference>
<dbReference type="InterPro" id="IPR050012">
    <property type="entry name" value="Glycl_HYPD"/>
</dbReference>
<dbReference type="InterPro" id="IPR051215">
    <property type="entry name" value="GRE"/>
</dbReference>
<dbReference type="InterPro" id="IPR004184">
    <property type="entry name" value="PFL_dom"/>
</dbReference>
<dbReference type="NCBIfam" id="NF043068">
    <property type="entry name" value="glycl_HYPD"/>
    <property type="match status" value="1"/>
</dbReference>
<dbReference type="PANTHER" id="PTHR43641:SF2">
    <property type="entry name" value="DEHYDRATASE YBIW-RELATED"/>
    <property type="match status" value="1"/>
</dbReference>
<dbReference type="PANTHER" id="PTHR43641">
    <property type="entry name" value="FORMATE ACETYLTRANSFERASE 3-RELATED"/>
    <property type="match status" value="1"/>
</dbReference>
<dbReference type="Pfam" id="PF01228">
    <property type="entry name" value="Gly_radical"/>
    <property type="match status" value="1"/>
</dbReference>
<dbReference type="Pfam" id="PF02901">
    <property type="entry name" value="PFL-like"/>
    <property type="match status" value="1"/>
</dbReference>
<dbReference type="SUPFAM" id="SSF51998">
    <property type="entry name" value="PFL-like glycyl radical enzymes"/>
    <property type="match status" value="1"/>
</dbReference>
<dbReference type="PROSITE" id="PS51149">
    <property type="entry name" value="GLY_RADICAL_2"/>
    <property type="match status" value="1"/>
</dbReference>
<dbReference type="PROSITE" id="PS51554">
    <property type="entry name" value="PFL"/>
    <property type="match status" value="1"/>
</dbReference>
<accession>A0A031WDE4</accession>
<evidence type="ECO:0000250" key="1">
    <source>
        <dbReference type="UniProtKB" id="Q30W70"/>
    </source>
</evidence>
<evidence type="ECO:0000255" key="2">
    <source>
        <dbReference type="PROSITE-ProRule" id="PRU00493"/>
    </source>
</evidence>
<evidence type="ECO:0000255" key="3">
    <source>
        <dbReference type="PROSITE-ProRule" id="PRU00887"/>
    </source>
</evidence>
<evidence type="ECO:0000269" key="4">
    <source>
    </source>
</evidence>
<evidence type="ECO:0000303" key="5">
    <source>
    </source>
</evidence>
<evidence type="ECO:0000303" key="6">
    <source ref="1"/>
</evidence>
<evidence type="ECO:0000305" key="7"/>
<evidence type="ECO:0000312" key="8">
    <source>
        <dbReference type="EMBL" id="CDS85123.1"/>
    </source>
</evidence>
<evidence type="ECO:0000312" key="9">
    <source>
        <dbReference type="EMBL" id="CDS89454.1"/>
    </source>
</evidence>
<evidence type="ECO:0000312" key="10">
    <source>
        <dbReference type="EMBL" id="CDT68933.1"/>
    </source>
</evidence>
<evidence type="ECO:0000312" key="11">
    <source>
        <dbReference type="EMBL" id="PBG28510.1"/>
    </source>
</evidence>
<evidence type="ECO:0000312" key="12">
    <source>
        <dbReference type="EMBL" id="SJT80202.1"/>
    </source>
</evidence>
<evidence type="ECO:0007829" key="13">
    <source>
        <dbReference type="PDB" id="6VXE"/>
    </source>
</evidence>
<protein>
    <recommendedName>
        <fullName evidence="5">Trans-4-hydroxy-L-proline dehydratase</fullName>
        <ecNumber evidence="4">4.2.1.172</ecNumber>
    </recommendedName>
    <alternativeName>
        <fullName evidence="7">Glycyl radical enzyme</fullName>
    </alternativeName>
    <alternativeName>
        <fullName evidence="5">Hyp dehydratase</fullName>
    </alternativeName>
</protein>
<reference key="1">
    <citation type="submission" date="2014-07" db="EMBL/GenBank/DDBJ databases">
        <authorList>
            <person name="Monot M."/>
        </authorList>
    </citation>
    <scope>NUCLEOTIDE SEQUENCE [LARGE SCALE GENOMIC DNA]</scope>
    <source>
        <strain evidence="10">7032989</strain>
        <strain evidence="8">7032994</strain>
    </source>
</reference>
<reference key="2">
    <citation type="submission" date="2016-11" db="EMBL/GenBank/DDBJ databases">
        <title>Genomic characterization of C. difficile isolates from children.</title>
        <authorList>
            <person name="Kociolek L.K."/>
            <person name="Ozer E.A."/>
        </authorList>
    </citation>
    <scope>NUCLEOTIDE SEQUENCE [LARGE SCALE GENOMIC DNA]</scope>
    <source>
        <strain evidence="11">6636-R/ST48</strain>
    </source>
</reference>
<reference key="3">
    <citation type="submission" date="2017-02" db="EMBL/GenBank/DDBJ databases">
        <authorList>
            <consortium name="Pathogen Informatics"/>
        </authorList>
    </citation>
    <scope>NUCLEOTIDE SEQUENCE [LARGE SCALE GENOMIC DNA]</scope>
    <source>
        <strain evidence="12">VRECD0033</strain>
    </source>
</reference>
<reference key="4">
    <citation type="journal article" date="2017" name="Science">
        <title>A prominent glycyl radical enzyme in human gut microbiomes metabolizes trans-4-hydroxy-L-proline.</title>
        <authorList>
            <person name="Levin B.J."/>
            <person name="Huang Y.Y."/>
            <person name="Peck S.C."/>
            <person name="Wei Y."/>
            <person name="Martinez-Del Campo A."/>
            <person name="Marks J.A."/>
            <person name="Franzosa E.A."/>
            <person name="Huttenhower C."/>
            <person name="Balskus E.P."/>
        </authorList>
    </citation>
    <scope>FUNCTION</scope>
    <scope>CATALYTIC ACTIVITY</scope>
    <scope>BIOPHYSICOCHEMICAL PROPERTIES</scope>
    <scope>GLYCYL RADICAL AT GLY-765</scope>
    <source>
        <strain>70-100-2010</strain>
    </source>
</reference>
<sequence>MARGTFERTKKLREESINAEPHISIERAVLMTEAYKKYEGSVEIPVLRALSFKHYIENRTLSINDGELIVGEKGDSPNGAPTYPEICCHTMEDLEVMHNRDIINFSVSEEARKIHKEEIIPFWKKRQTRDKIINAMTPEWLAAYEAGMFTEFMEQRAPGHTVCGDTIYKKGFLDLKKDIEARLKELDFLNDLDAYNKKADLEAMAIACDAMVILGKRYAEKARQMAEEETDEAKKKDLLLIAETCDVVPAHKPETYHQAIQMYWFVHIGVTTELNIWDAFTPGRLDQHLNPFYERDVENGILDRDRAQELLECLWVKFNNQPAPPKVGITLKESSTYTDFANINTGGINPDGQDGVNEVSYIILDVMDEMKLIQPSSNVQISKKTPQKFLKRACEISRKGWGQPAFYNTEAIVQELMEAGKTIEDARLGGTSGCVETGCFGKEAYVLTGYMNIPKILELTLNNGYDPISKKQIGIETGDPRNFQSYEELFEAFKKQLHYMIDIKIEGNAVIENICAKHMPCPLMSTIVDDCIEKGKDYQRGGARYNTRYIQGVGIGTITDSLTAIKYNVFDKKKFDMDTLLKALDANFEGYEAILNLVSNKTPKYGNDDDYADEIMQEIFNAYYNEVTGRPTVCGGEYRVDMLPTTCHIYFGEIMGASPNGRLCAKPVSEGISPEKGGDTNGPTAVIKSCAKMDHIKTGGTLLNQRFAPSVVQGEKGLDNMANLVRAYFNMDGHHIQFNVFDKNVLLEAQKNPQDYKDLIVRVAGYSDHFNNLSRTLQDEIIGRTEQTF</sequence>